<keyword id="KW-0687">Ribonucleoprotein</keyword>
<keyword id="KW-0689">Ribosomal protein</keyword>
<keyword id="KW-0694">RNA-binding</keyword>
<keyword id="KW-0699">rRNA-binding</keyword>
<protein>
    <recommendedName>
        <fullName evidence="1">Large ribosomal subunit protein bL20</fullName>
    </recommendedName>
    <alternativeName>
        <fullName evidence="2">50S ribosomal protein L20</fullName>
    </alternativeName>
</protein>
<name>RL20_ECO81</name>
<organism>
    <name type="scientific">Escherichia coli O81 (strain ED1a)</name>
    <dbReference type="NCBI Taxonomy" id="585397"/>
    <lineage>
        <taxon>Bacteria</taxon>
        <taxon>Pseudomonadati</taxon>
        <taxon>Pseudomonadota</taxon>
        <taxon>Gammaproteobacteria</taxon>
        <taxon>Enterobacterales</taxon>
        <taxon>Enterobacteriaceae</taxon>
        <taxon>Escherichia</taxon>
    </lineage>
</organism>
<feature type="chain" id="PRO_1000193961" description="Large ribosomal subunit protein bL20">
    <location>
        <begin position="1"/>
        <end position="118"/>
    </location>
</feature>
<evidence type="ECO:0000255" key="1">
    <source>
        <dbReference type="HAMAP-Rule" id="MF_00382"/>
    </source>
</evidence>
<evidence type="ECO:0000305" key="2"/>
<comment type="function">
    <text evidence="1">Binds directly to 23S ribosomal RNA and is necessary for the in vitro assembly process of the 50S ribosomal subunit. It is not involved in the protein synthesizing functions of that subunit.</text>
</comment>
<comment type="similarity">
    <text evidence="1">Belongs to the bacterial ribosomal protein bL20 family.</text>
</comment>
<sequence>MARVKRGVIARARHKKILKQAKGYYGARSRVYRVAFQAVIKAGQYAYRDRRQRKRQFRQLWIARINAAARQNGISYSKFINGLKKASVEIDRKILADIAVFDKVAFTALVEKAKAALA</sequence>
<gene>
    <name evidence="1" type="primary">rplT</name>
    <name type="ordered locus">ECED1_1917</name>
</gene>
<proteinExistence type="inferred from homology"/>
<dbReference type="EMBL" id="CU928162">
    <property type="protein sequence ID" value="CAR08110.2"/>
    <property type="molecule type" value="Genomic_DNA"/>
</dbReference>
<dbReference type="RefSeq" id="WP_000124850.1">
    <property type="nucleotide sequence ID" value="NC_011745.1"/>
</dbReference>
<dbReference type="SMR" id="B7MVJ4"/>
<dbReference type="GeneID" id="98388757"/>
<dbReference type="KEGG" id="ecq:ECED1_1917"/>
<dbReference type="HOGENOM" id="CLU_123265_0_1_6"/>
<dbReference type="Proteomes" id="UP000000748">
    <property type="component" value="Chromosome"/>
</dbReference>
<dbReference type="GO" id="GO:1990904">
    <property type="term" value="C:ribonucleoprotein complex"/>
    <property type="evidence" value="ECO:0007669"/>
    <property type="project" value="UniProtKB-KW"/>
</dbReference>
<dbReference type="GO" id="GO:0005840">
    <property type="term" value="C:ribosome"/>
    <property type="evidence" value="ECO:0007669"/>
    <property type="project" value="UniProtKB-KW"/>
</dbReference>
<dbReference type="GO" id="GO:0019843">
    <property type="term" value="F:rRNA binding"/>
    <property type="evidence" value="ECO:0007669"/>
    <property type="project" value="UniProtKB-UniRule"/>
</dbReference>
<dbReference type="GO" id="GO:0003735">
    <property type="term" value="F:structural constituent of ribosome"/>
    <property type="evidence" value="ECO:0007669"/>
    <property type="project" value="InterPro"/>
</dbReference>
<dbReference type="GO" id="GO:0000027">
    <property type="term" value="P:ribosomal large subunit assembly"/>
    <property type="evidence" value="ECO:0007669"/>
    <property type="project" value="UniProtKB-UniRule"/>
</dbReference>
<dbReference type="GO" id="GO:0006412">
    <property type="term" value="P:translation"/>
    <property type="evidence" value="ECO:0007669"/>
    <property type="project" value="InterPro"/>
</dbReference>
<dbReference type="CDD" id="cd07026">
    <property type="entry name" value="Ribosomal_L20"/>
    <property type="match status" value="1"/>
</dbReference>
<dbReference type="FunFam" id="1.10.1900.20:FF:000001">
    <property type="entry name" value="50S ribosomal protein L20"/>
    <property type="match status" value="1"/>
</dbReference>
<dbReference type="Gene3D" id="6.10.160.10">
    <property type="match status" value="1"/>
</dbReference>
<dbReference type="Gene3D" id="1.10.1900.20">
    <property type="entry name" value="Ribosomal protein L20"/>
    <property type="match status" value="1"/>
</dbReference>
<dbReference type="HAMAP" id="MF_00382">
    <property type="entry name" value="Ribosomal_bL20"/>
    <property type="match status" value="1"/>
</dbReference>
<dbReference type="InterPro" id="IPR005813">
    <property type="entry name" value="Ribosomal_bL20"/>
</dbReference>
<dbReference type="InterPro" id="IPR049946">
    <property type="entry name" value="RIBOSOMAL_L20_CS"/>
</dbReference>
<dbReference type="InterPro" id="IPR035566">
    <property type="entry name" value="Ribosomal_protein_bL20_C"/>
</dbReference>
<dbReference type="NCBIfam" id="TIGR01032">
    <property type="entry name" value="rplT_bact"/>
    <property type="match status" value="1"/>
</dbReference>
<dbReference type="PANTHER" id="PTHR10986">
    <property type="entry name" value="39S RIBOSOMAL PROTEIN L20"/>
    <property type="match status" value="1"/>
</dbReference>
<dbReference type="Pfam" id="PF00453">
    <property type="entry name" value="Ribosomal_L20"/>
    <property type="match status" value="1"/>
</dbReference>
<dbReference type="PRINTS" id="PR00062">
    <property type="entry name" value="RIBOSOMALL20"/>
</dbReference>
<dbReference type="SUPFAM" id="SSF74731">
    <property type="entry name" value="Ribosomal protein L20"/>
    <property type="match status" value="1"/>
</dbReference>
<dbReference type="PROSITE" id="PS00937">
    <property type="entry name" value="RIBOSOMAL_L20"/>
    <property type="match status" value="1"/>
</dbReference>
<accession>B7MVJ4</accession>
<reference key="1">
    <citation type="journal article" date="2009" name="PLoS Genet.">
        <title>Organised genome dynamics in the Escherichia coli species results in highly diverse adaptive paths.</title>
        <authorList>
            <person name="Touchon M."/>
            <person name="Hoede C."/>
            <person name="Tenaillon O."/>
            <person name="Barbe V."/>
            <person name="Baeriswyl S."/>
            <person name="Bidet P."/>
            <person name="Bingen E."/>
            <person name="Bonacorsi S."/>
            <person name="Bouchier C."/>
            <person name="Bouvet O."/>
            <person name="Calteau A."/>
            <person name="Chiapello H."/>
            <person name="Clermont O."/>
            <person name="Cruveiller S."/>
            <person name="Danchin A."/>
            <person name="Diard M."/>
            <person name="Dossat C."/>
            <person name="Karoui M.E."/>
            <person name="Frapy E."/>
            <person name="Garry L."/>
            <person name="Ghigo J.M."/>
            <person name="Gilles A.M."/>
            <person name="Johnson J."/>
            <person name="Le Bouguenec C."/>
            <person name="Lescat M."/>
            <person name="Mangenot S."/>
            <person name="Martinez-Jehanne V."/>
            <person name="Matic I."/>
            <person name="Nassif X."/>
            <person name="Oztas S."/>
            <person name="Petit M.A."/>
            <person name="Pichon C."/>
            <person name="Rouy Z."/>
            <person name="Ruf C.S."/>
            <person name="Schneider D."/>
            <person name="Tourret J."/>
            <person name="Vacherie B."/>
            <person name="Vallenet D."/>
            <person name="Medigue C."/>
            <person name="Rocha E.P.C."/>
            <person name="Denamur E."/>
        </authorList>
    </citation>
    <scope>NUCLEOTIDE SEQUENCE [LARGE SCALE GENOMIC DNA]</scope>
    <source>
        <strain>ED1a</strain>
    </source>
</reference>